<dbReference type="EC" id="7.5.2.7" evidence="1"/>
<dbReference type="EMBL" id="CP000377">
    <property type="protein sequence ID" value="ABF63921.1"/>
    <property type="molecule type" value="Genomic_DNA"/>
</dbReference>
<dbReference type="RefSeq" id="WP_011538528.1">
    <property type="nucleotide sequence ID" value="NC_008044.1"/>
</dbReference>
<dbReference type="SMR" id="Q1GHE5"/>
<dbReference type="STRING" id="292414.TM1040_1188"/>
<dbReference type="KEGG" id="sit:TM1040_1188"/>
<dbReference type="eggNOG" id="COG1129">
    <property type="taxonomic scope" value="Bacteria"/>
</dbReference>
<dbReference type="HOGENOM" id="CLU_000604_92_3_5"/>
<dbReference type="OrthoDB" id="9805029at2"/>
<dbReference type="Proteomes" id="UP000000636">
    <property type="component" value="Chromosome"/>
</dbReference>
<dbReference type="GO" id="GO:0005886">
    <property type="term" value="C:plasma membrane"/>
    <property type="evidence" value="ECO:0007669"/>
    <property type="project" value="UniProtKB-SubCell"/>
</dbReference>
<dbReference type="GO" id="GO:0015611">
    <property type="term" value="F:ABC-type D-ribose transporter activity"/>
    <property type="evidence" value="ECO:0007669"/>
    <property type="project" value="UniProtKB-EC"/>
</dbReference>
<dbReference type="GO" id="GO:0005524">
    <property type="term" value="F:ATP binding"/>
    <property type="evidence" value="ECO:0007669"/>
    <property type="project" value="UniProtKB-KW"/>
</dbReference>
<dbReference type="GO" id="GO:0016887">
    <property type="term" value="F:ATP hydrolysis activity"/>
    <property type="evidence" value="ECO:0007669"/>
    <property type="project" value="InterPro"/>
</dbReference>
<dbReference type="CDD" id="cd03216">
    <property type="entry name" value="ABC_Carb_Monos_I"/>
    <property type="match status" value="1"/>
</dbReference>
<dbReference type="CDD" id="cd03215">
    <property type="entry name" value="ABC_Carb_Monos_II"/>
    <property type="match status" value="1"/>
</dbReference>
<dbReference type="FunFam" id="3.40.50.300:FF:000127">
    <property type="entry name" value="Ribose import ATP-binding protein RbsA"/>
    <property type="match status" value="1"/>
</dbReference>
<dbReference type="Gene3D" id="3.40.50.300">
    <property type="entry name" value="P-loop containing nucleotide triphosphate hydrolases"/>
    <property type="match status" value="2"/>
</dbReference>
<dbReference type="InterPro" id="IPR003593">
    <property type="entry name" value="AAA+_ATPase"/>
</dbReference>
<dbReference type="InterPro" id="IPR050107">
    <property type="entry name" value="ABC_carbohydrate_import_ATPase"/>
</dbReference>
<dbReference type="InterPro" id="IPR003439">
    <property type="entry name" value="ABC_transporter-like_ATP-bd"/>
</dbReference>
<dbReference type="InterPro" id="IPR017871">
    <property type="entry name" value="ABC_transporter-like_CS"/>
</dbReference>
<dbReference type="InterPro" id="IPR027417">
    <property type="entry name" value="P-loop_NTPase"/>
</dbReference>
<dbReference type="PANTHER" id="PTHR43790:SF2">
    <property type="entry name" value="AUTOINDUCER 2 IMPORT ATP-BINDING PROTEIN LSRA"/>
    <property type="match status" value="1"/>
</dbReference>
<dbReference type="PANTHER" id="PTHR43790">
    <property type="entry name" value="CARBOHYDRATE TRANSPORT ATP-BINDING PROTEIN MG119-RELATED"/>
    <property type="match status" value="1"/>
</dbReference>
<dbReference type="Pfam" id="PF00005">
    <property type="entry name" value="ABC_tran"/>
    <property type="match status" value="2"/>
</dbReference>
<dbReference type="SMART" id="SM00382">
    <property type="entry name" value="AAA"/>
    <property type="match status" value="2"/>
</dbReference>
<dbReference type="SUPFAM" id="SSF52540">
    <property type="entry name" value="P-loop containing nucleoside triphosphate hydrolases"/>
    <property type="match status" value="2"/>
</dbReference>
<dbReference type="PROSITE" id="PS00211">
    <property type="entry name" value="ABC_TRANSPORTER_1"/>
    <property type="match status" value="1"/>
</dbReference>
<dbReference type="PROSITE" id="PS50893">
    <property type="entry name" value="ABC_TRANSPORTER_2"/>
    <property type="match status" value="2"/>
</dbReference>
<dbReference type="PROSITE" id="PS51254">
    <property type="entry name" value="RBSA"/>
    <property type="match status" value="1"/>
</dbReference>
<name>RBSA_RUEST</name>
<protein>
    <recommendedName>
        <fullName evidence="1">Ribose import ATP-binding protein RbsA</fullName>
        <ecNumber evidence="1">7.5.2.7</ecNumber>
    </recommendedName>
</protein>
<proteinExistence type="inferred from homology"/>
<evidence type="ECO:0000255" key="1">
    <source>
        <dbReference type="HAMAP-Rule" id="MF_01716"/>
    </source>
</evidence>
<feature type="chain" id="PRO_0000261104" description="Ribose import ATP-binding protein RbsA">
    <location>
        <begin position="1"/>
        <end position="511"/>
    </location>
</feature>
<feature type="domain" description="ABC transporter 1" evidence="1">
    <location>
        <begin position="7"/>
        <end position="242"/>
    </location>
</feature>
<feature type="domain" description="ABC transporter 2" evidence="1">
    <location>
        <begin position="256"/>
        <end position="500"/>
    </location>
</feature>
<feature type="binding site" evidence="1">
    <location>
        <begin position="39"/>
        <end position="46"/>
    </location>
    <ligand>
        <name>ATP</name>
        <dbReference type="ChEBI" id="CHEBI:30616"/>
    </ligand>
</feature>
<sequence length="511" mass="54981">MTGDVILQISNLTKSFGPVKALKGVDFELRRGEIHAIAGENGAGKSTLMNIIDGILQPDSGEIRLDGTPVEIPSPAAAQKMGIGFVHQEIALCPDVSVAENIFMAATNSSRSFLMDYKGIEAKAREVFAQLSSIDPSVLVRDLSISNQQLVEIAKALTLDCRVLILDEPTAALTEAEAQVLFKIMRRLADQGISLIYISHRMVEIFDNCDRVSVFRDGRYVTTQDVAKITPADVVRAMVGREIGDLYPEKQRPEACSTTEVLRVENLCEAERFHDVSFSLHKGEILGFAGLIGAGRSEIAKGVCALEGQVTGRLWLNGEPLALRDYQDSIDAGIVYLSEDRKGDGVFLDMSIASNVSALKVEQVASALGLIQPGREIEQADRLGRKLNLKCGTLQDPVSSLSGGNQQKVALAKMLSVNPRLIFLDEPTRGVDVGAKAEIYRILRDLAEEGAGIVVISSELPELIGLCDRVLVIHEGCLSGEVSGPDMTEENIMHLASGTQQGTGAASVAAQ</sequence>
<gene>
    <name evidence="1" type="primary">rbsA</name>
    <name type="ordered locus">TM1040_1188</name>
</gene>
<organism>
    <name type="scientific">Ruegeria sp. (strain TM1040)</name>
    <name type="common">Silicibacter sp.</name>
    <dbReference type="NCBI Taxonomy" id="292414"/>
    <lineage>
        <taxon>Bacteria</taxon>
        <taxon>Pseudomonadati</taxon>
        <taxon>Pseudomonadota</taxon>
        <taxon>Alphaproteobacteria</taxon>
        <taxon>Rhodobacterales</taxon>
        <taxon>Roseobacteraceae</taxon>
        <taxon>Ruegeria</taxon>
    </lineage>
</organism>
<reference key="1">
    <citation type="submission" date="2006-05" db="EMBL/GenBank/DDBJ databases">
        <title>Complete sequence of chromosome of Silicibacter sp. TM1040.</title>
        <authorList>
            <consortium name="US DOE Joint Genome Institute"/>
            <person name="Copeland A."/>
            <person name="Lucas S."/>
            <person name="Lapidus A."/>
            <person name="Barry K."/>
            <person name="Detter J.C."/>
            <person name="Glavina del Rio T."/>
            <person name="Hammon N."/>
            <person name="Israni S."/>
            <person name="Dalin E."/>
            <person name="Tice H."/>
            <person name="Pitluck S."/>
            <person name="Brettin T."/>
            <person name="Bruce D."/>
            <person name="Han C."/>
            <person name="Tapia R."/>
            <person name="Goodwin L."/>
            <person name="Thompson L.S."/>
            <person name="Gilna P."/>
            <person name="Schmutz J."/>
            <person name="Larimer F."/>
            <person name="Land M."/>
            <person name="Hauser L."/>
            <person name="Kyrpides N."/>
            <person name="Kim E."/>
            <person name="Belas R."/>
            <person name="Moran M.A."/>
            <person name="Buchan A."/>
            <person name="Gonzalez J.M."/>
            <person name="Schell M.A."/>
            <person name="Sun F."/>
            <person name="Richardson P."/>
        </authorList>
    </citation>
    <scope>NUCLEOTIDE SEQUENCE [LARGE SCALE GENOMIC DNA]</scope>
    <source>
        <strain>TM1040</strain>
    </source>
</reference>
<accession>Q1GHE5</accession>
<keyword id="KW-0067">ATP-binding</keyword>
<keyword id="KW-0997">Cell inner membrane</keyword>
<keyword id="KW-1003">Cell membrane</keyword>
<keyword id="KW-0472">Membrane</keyword>
<keyword id="KW-0547">Nucleotide-binding</keyword>
<keyword id="KW-1185">Reference proteome</keyword>
<keyword id="KW-0677">Repeat</keyword>
<keyword id="KW-0762">Sugar transport</keyword>
<keyword id="KW-1278">Translocase</keyword>
<keyword id="KW-0813">Transport</keyword>
<comment type="function">
    <text evidence="1">Part of the ABC transporter complex RbsABC involved in ribose import. Responsible for energy coupling to the transport system.</text>
</comment>
<comment type="catalytic activity">
    <reaction evidence="1">
        <text>D-ribose(out) + ATP + H2O = D-ribose(in) + ADP + phosphate + H(+)</text>
        <dbReference type="Rhea" id="RHEA:29903"/>
        <dbReference type="ChEBI" id="CHEBI:15377"/>
        <dbReference type="ChEBI" id="CHEBI:15378"/>
        <dbReference type="ChEBI" id="CHEBI:30616"/>
        <dbReference type="ChEBI" id="CHEBI:43474"/>
        <dbReference type="ChEBI" id="CHEBI:47013"/>
        <dbReference type="ChEBI" id="CHEBI:456216"/>
        <dbReference type="EC" id="7.5.2.7"/>
    </reaction>
</comment>
<comment type="subunit">
    <text evidence="1">The complex is composed of an ATP-binding protein (RbsA), two transmembrane proteins (RbsC) and a solute-binding protein (RbsB).</text>
</comment>
<comment type="subcellular location">
    <subcellularLocation>
        <location evidence="1">Cell inner membrane</location>
        <topology evidence="1">Peripheral membrane protein</topology>
    </subcellularLocation>
</comment>
<comment type="similarity">
    <text evidence="1">Belongs to the ABC transporter superfamily. Ribose importer (TC 3.A.1.2.1) family.</text>
</comment>